<organism>
    <name type="scientific">Mus musculus</name>
    <name type="common">Mouse</name>
    <dbReference type="NCBI Taxonomy" id="10090"/>
    <lineage>
        <taxon>Eukaryota</taxon>
        <taxon>Metazoa</taxon>
        <taxon>Chordata</taxon>
        <taxon>Craniata</taxon>
        <taxon>Vertebrata</taxon>
        <taxon>Euteleostomi</taxon>
        <taxon>Mammalia</taxon>
        <taxon>Eutheria</taxon>
        <taxon>Euarchontoglires</taxon>
        <taxon>Glires</taxon>
        <taxon>Rodentia</taxon>
        <taxon>Myomorpha</taxon>
        <taxon>Muroidea</taxon>
        <taxon>Muridae</taxon>
        <taxon>Murinae</taxon>
        <taxon>Mus</taxon>
        <taxon>Mus</taxon>
    </lineage>
</organism>
<reference key="1">
    <citation type="journal article" date="2005" name="Science">
        <title>The transcriptional landscape of the mammalian genome.</title>
        <authorList>
            <person name="Carninci P."/>
            <person name="Kasukawa T."/>
            <person name="Katayama S."/>
            <person name="Gough J."/>
            <person name="Frith M.C."/>
            <person name="Maeda N."/>
            <person name="Oyama R."/>
            <person name="Ravasi T."/>
            <person name="Lenhard B."/>
            <person name="Wells C."/>
            <person name="Kodzius R."/>
            <person name="Shimokawa K."/>
            <person name="Bajic V.B."/>
            <person name="Brenner S.E."/>
            <person name="Batalov S."/>
            <person name="Forrest A.R."/>
            <person name="Zavolan M."/>
            <person name="Davis M.J."/>
            <person name="Wilming L.G."/>
            <person name="Aidinis V."/>
            <person name="Allen J.E."/>
            <person name="Ambesi-Impiombato A."/>
            <person name="Apweiler R."/>
            <person name="Aturaliya R.N."/>
            <person name="Bailey T.L."/>
            <person name="Bansal M."/>
            <person name="Baxter L."/>
            <person name="Beisel K.W."/>
            <person name="Bersano T."/>
            <person name="Bono H."/>
            <person name="Chalk A.M."/>
            <person name="Chiu K.P."/>
            <person name="Choudhary V."/>
            <person name="Christoffels A."/>
            <person name="Clutterbuck D.R."/>
            <person name="Crowe M.L."/>
            <person name="Dalla E."/>
            <person name="Dalrymple B.P."/>
            <person name="de Bono B."/>
            <person name="Della Gatta G."/>
            <person name="di Bernardo D."/>
            <person name="Down T."/>
            <person name="Engstrom P."/>
            <person name="Fagiolini M."/>
            <person name="Faulkner G."/>
            <person name="Fletcher C.F."/>
            <person name="Fukushima T."/>
            <person name="Furuno M."/>
            <person name="Futaki S."/>
            <person name="Gariboldi M."/>
            <person name="Georgii-Hemming P."/>
            <person name="Gingeras T.R."/>
            <person name="Gojobori T."/>
            <person name="Green R.E."/>
            <person name="Gustincich S."/>
            <person name="Harbers M."/>
            <person name="Hayashi Y."/>
            <person name="Hensch T.K."/>
            <person name="Hirokawa N."/>
            <person name="Hill D."/>
            <person name="Huminiecki L."/>
            <person name="Iacono M."/>
            <person name="Ikeo K."/>
            <person name="Iwama A."/>
            <person name="Ishikawa T."/>
            <person name="Jakt M."/>
            <person name="Kanapin A."/>
            <person name="Katoh M."/>
            <person name="Kawasawa Y."/>
            <person name="Kelso J."/>
            <person name="Kitamura H."/>
            <person name="Kitano H."/>
            <person name="Kollias G."/>
            <person name="Krishnan S.P."/>
            <person name="Kruger A."/>
            <person name="Kummerfeld S.K."/>
            <person name="Kurochkin I.V."/>
            <person name="Lareau L.F."/>
            <person name="Lazarevic D."/>
            <person name="Lipovich L."/>
            <person name="Liu J."/>
            <person name="Liuni S."/>
            <person name="McWilliam S."/>
            <person name="Madan Babu M."/>
            <person name="Madera M."/>
            <person name="Marchionni L."/>
            <person name="Matsuda H."/>
            <person name="Matsuzawa S."/>
            <person name="Miki H."/>
            <person name="Mignone F."/>
            <person name="Miyake S."/>
            <person name="Morris K."/>
            <person name="Mottagui-Tabar S."/>
            <person name="Mulder N."/>
            <person name="Nakano N."/>
            <person name="Nakauchi H."/>
            <person name="Ng P."/>
            <person name="Nilsson R."/>
            <person name="Nishiguchi S."/>
            <person name="Nishikawa S."/>
            <person name="Nori F."/>
            <person name="Ohara O."/>
            <person name="Okazaki Y."/>
            <person name="Orlando V."/>
            <person name="Pang K.C."/>
            <person name="Pavan W.J."/>
            <person name="Pavesi G."/>
            <person name="Pesole G."/>
            <person name="Petrovsky N."/>
            <person name="Piazza S."/>
            <person name="Reed J."/>
            <person name="Reid J.F."/>
            <person name="Ring B.Z."/>
            <person name="Ringwald M."/>
            <person name="Rost B."/>
            <person name="Ruan Y."/>
            <person name="Salzberg S.L."/>
            <person name="Sandelin A."/>
            <person name="Schneider C."/>
            <person name="Schoenbach C."/>
            <person name="Sekiguchi K."/>
            <person name="Semple C.A."/>
            <person name="Seno S."/>
            <person name="Sessa L."/>
            <person name="Sheng Y."/>
            <person name="Shibata Y."/>
            <person name="Shimada H."/>
            <person name="Shimada K."/>
            <person name="Silva D."/>
            <person name="Sinclair B."/>
            <person name="Sperling S."/>
            <person name="Stupka E."/>
            <person name="Sugiura K."/>
            <person name="Sultana R."/>
            <person name="Takenaka Y."/>
            <person name="Taki K."/>
            <person name="Tammoja K."/>
            <person name="Tan S.L."/>
            <person name="Tang S."/>
            <person name="Taylor M.S."/>
            <person name="Tegner J."/>
            <person name="Teichmann S.A."/>
            <person name="Ueda H.R."/>
            <person name="van Nimwegen E."/>
            <person name="Verardo R."/>
            <person name="Wei C.L."/>
            <person name="Yagi K."/>
            <person name="Yamanishi H."/>
            <person name="Zabarovsky E."/>
            <person name="Zhu S."/>
            <person name="Zimmer A."/>
            <person name="Hide W."/>
            <person name="Bult C."/>
            <person name="Grimmond S.M."/>
            <person name="Teasdale R.D."/>
            <person name="Liu E.T."/>
            <person name="Brusic V."/>
            <person name="Quackenbush J."/>
            <person name="Wahlestedt C."/>
            <person name="Mattick J.S."/>
            <person name="Hume D.A."/>
            <person name="Kai C."/>
            <person name="Sasaki D."/>
            <person name="Tomaru Y."/>
            <person name="Fukuda S."/>
            <person name="Kanamori-Katayama M."/>
            <person name="Suzuki M."/>
            <person name="Aoki J."/>
            <person name="Arakawa T."/>
            <person name="Iida J."/>
            <person name="Imamura K."/>
            <person name="Itoh M."/>
            <person name="Kato T."/>
            <person name="Kawaji H."/>
            <person name="Kawagashira N."/>
            <person name="Kawashima T."/>
            <person name="Kojima M."/>
            <person name="Kondo S."/>
            <person name="Konno H."/>
            <person name="Nakano K."/>
            <person name="Ninomiya N."/>
            <person name="Nishio T."/>
            <person name="Okada M."/>
            <person name="Plessy C."/>
            <person name="Shibata K."/>
            <person name="Shiraki T."/>
            <person name="Suzuki S."/>
            <person name="Tagami M."/>
            <person name="Waki K."/>
            <person name="Watahiki A."/>
            <person name="Okamura-Oho Y."/>
            <person name="Suzuki H."/>
            <person name="Kawai J."/>
            <person name="Hayashizaki Y."/>
        </authorList>
    </citation>
    <scope>NUCLEOTIDE SEQUENCE [LARGE SCALE MRNA]</scope>
    <source>
        <strain>C57BL/6J</strain>
        <strain>NOD</strain>
        <tissue>Spleen</tissue>
        <tissue>Wolffian duct</tissue>
    </source>
</reference>
<reference key="2">
    <citation type="journal article" date="2009" name="PLoS Biol.">
        <title>Lineage-specific biology revealed by a finished genome assembly of the mouse.</title>
        <authorList>
            <person name="Church D.M."/>
            <person name="Goodstadt L."/>
            <person name="Hillier L.W."/>
            <person name="Zody M.C."/>
            <person name="Goldstein S."/>
            <person name="She X."/>
            <person name="Bult C.J."/>
            <person name="Agarwala R."/>
            <person name="Cherry J.L."/>
            <person name="DiCuccio M."/>
            <person name="Hlavina W."/>
            <person name="Kapustin Y."/>
            <person name="Meric P."/>
            <person name="Maglott D."/>
            <person name="Birtle Z."/>
            <person name="Marques A.C."/>
            <person name="Graves T."/>
            <person name="Zhou S."/>
            <person name="Teague B."/>
            <person name="Potamousis K."/>
            <person name="Churas C."/>
            <person name="Place M."/>
            <person name="Herschleb J."/>
            <person name="Runnheim R."/>
            <person name="Forrest D."/>
            <person name="Amos-Landgraf J."/>
            <person name="Schwartz D.C."/>
            <person name="Cheng Z."/>
            <person name="Lindblad-Toh K."/>
            <person name="Eichler E.E."/>
            <person name="Ponting C.P."/>
        </authorList>
    </citation>
    <scope>NUCLEOTIDE SEQUENCE [LARGE SCALE GENOMIC DNA]</scope>
    <source>
        <strain>C57BL/6J</strain>
    </source>
</reference>
<reference key="3">
    <citation type="journal article" date="2010" name="Cell">
        <title>A tissue-specific atlas of mouse protein phosphorylation and expression.</title>
        <authorList>
            <person name="Huttlin E.L."/>
            <person name="Jedrychowski M.P."/>
            <person name="Elias J.E."/>
            <person name="Goswami T."/>
            <person name="Rad R."/>
            <person name="Beausoleil S.A."/>
            <person name="Villen J."/>
            <person name="Haas W."/>
            <person name="Sowa M.E."/>
            <person name="Gygi S.P."/>
        </authorList>
    </citation>
    <scope>IDENTIFICATION BY MASS SPECTROMETRY [LARGE SCALE ANALYSIS]</scope>
    <source>
        <tissue>Brain</tissue>
        <tissue>Testis</tissue>
    </source>
</reference>
<protein>
    <recommendedName>
        <fullName evidence="6">R3H and coiled-coil domain-containing protein 1</fullName>
    </recommendedName>
</protein>
<gene>
    <name evidence="6" type="primary">R3hcc1</name>
</gene>
<comment type="caution">
    <text evidence="5">Ribosome profiling data indicate that translation initiates from the non-AUG (CUG) codon used here.</text>
</comment>
<comment type="sequence caution" evidence="5">
    <conflict type="erroneous initiation">
        <sequence resource="EMBL-CDS" id="BAC28055"/>
    </conflict>
    <text>Extended N-terminus.</text>
</comment>
<comment type="sequence caution" evidence="5">
    <conflict type="erroneous initiation">
        <sequence resource="EMBL-CDS" id="BAE33872"/>
    </conflict>
    <text>Truncated N-terminus.</text>
</comment>
<accession>Q8BSI6</accession>
<evidence type="ECO:0000250" key="1">
    <source>
        <dbReference type="UniProtKB" id="Q9Y3T6"/>
    </source>
</evidence>
<evidence type="ECO:0000255" key="2"/>
<evidence type="ECO:0000255" key="3">
    <source>
        <dbReference type="PROSITE-ProRule" id="PRU00382"/>
    </source>
</evidence>
<evidence type="ECO:0000256" key="4">
    <source>
        <dbReference type="SAM" id="MobiDB-lite"/>
    </source>
</evidence>
<evidence type="ECO:0000305" key="5"/>
<evidence type="ECO:0000312" key="6">
    <source>
        <dbReference type="MGI" id="MGI:1919093"/>
    </source>
</evidence>
<keyword id="KW-0175">Coiled coil</keyword>
<keyword id="KW-0597">Phosphoprotein</keyword>
<keyword id="KW-1185">Reference proteome</keyword>
<feature type="chain" id="PRO_0000307390" description="R3H and coiled-coil domain-containing protein 1">
    <location>
        <begin position="1"/>
        <end position="488"/>
    </location>
</feature>
<feature type="domain" description="R3H" evidence="3">
    <location>
        <begin position="16"/>
        <end position="81"/>
    </location>
</feature>
<feature type="region of interest" description="Disordered" evidence="4">
    <location>
        <begin position="87"/>
        <end position="180"/>
    </location>
</feature>
<feature type="region of interest" description="Disordered" evidence="4">
    <location>
        <begin position="195"/>
        <end position="322"/>
    </location>
</feature>
<feature type="coiled-coil region" evidence="2">
    <location>
        <begin position="244"/>
        <end position="321"/>
    </location>
</feature>
<feature type="compositionally biased region" description="Low complexity" evidence="4">
    <location>
        <begin position="114"/>
        <end position="125"/>
    </location>
</feature>
<feature type="compositionally biased region" description="Acidic residues" evidence="4">
    <location>
        <begin position="252"/>
        <end position="265"/>
    </location>
</feature>
<feature type="compositionally biased region" description="Basic and acidic residues" evidence="4">
    <location>
        <begin position="266"/>
        <end position="280"/>
    </location>
</feature>
<feature type="compositionally biased region" description="Basic and acidic residues" evidence="4">
    <location>
        <begin position="287"/>
        <end position="301"/>
    </location>
</feature>
<feature type="compositionally biased region" description="Acidic residues" evidence="4">
    <location>
        <begin position="302"/>
        <end position="319"/>
    </location>
</feature>
<feature type="modified residue" description="Phosphoserine" evidence="1">
    <location>
        <position position="232"/>
    </location>
</feature>
<proteinExistence type="evidence at protein level"/>
<dbReference type="EMBL" id="AK032854">
    <property type="protein sequence ID" value="BAC28055.1"/>
    <property type="status" value="ALT_INIT"/>
    <property type="molecule type" value="mRNA"/>
</dbReference>
<dbReference type="EMBL" id="AK156843">
    <property type="protein sequence ID" value="BAE33872.1"/>
    <property type="status" value="ALT_INIT"/>
    <property type="molecule type" value="mRNA"/>
</dbReference>
<dbReference type="EMBL" id="AC160639">
    <property type="status" value="NOT_ANNOTATED_CDS"/>
    <property type="molecule type" value="Genomic_DNA"/>
</dbReference>
<dbReference type="CCDS" id="CCDS49533.2"/>
<dbReference type="RefSeq" id="NP_001139484.2">
    <property type="nucleotide sequence ID" value="NM_001146012.3"/>
</dbReference>
<dbReference type="RefSeq" id="NP_001288581.1">
    <property type="nucleotide sequence ID" value="NM_001301652.1"/>
</dbReference>
<dbReference type="SMR" id="Q8BSI6"/>
<dbReference type="FunCoup" id="Q8BSI6">
    <property type="interactions" value="1431"/>
</dbReference>
<dbReference type="STRING" id="10090.ENSMUSP00000113898"/>
<dbReference type="GlyGen" id="Q8BSI6">
    <property type="glycosylation" value="1 site"/>
</dbReference>
<dbReference type="iPTMnet" id="Q8BSI6"/>
<dbReference type="PhosphoSitePlus" id="Q8BSI6"/>
<dbReference type="jPOST" id="Q8BSI6"/>
<dbReference type="PaxDb" id="10090-ENSMUSP00000113450"/>
<dbReference type="ProteomicsDB" id="301909"/>
<dbReference type="Pumba" id="Q8BSI6"/>
<dbReference type="Antibodypedia" id="5331">
    <property type="antibodies" value="27 antibodies from 10 providers"/>
</dbReference>
<dbReference type="Ensembl" id="ENSMUST00000118374.8">
    <property type="protein sequence ID" value="ENSMUSP00000113450.3"/>
    <property type="gene ID" value="ENSMUSG00000034194.19"/>
</dbReference>
<dbReference type="Ensembl" id="ENSMUST00000121142.4">
    <property type="protein sequence ID" value="ENSMUSP00000113898.3"/>
    <property type="gene ID" value="ENSMUSG00000034194.19"/>
</dbReference>
<dbReference type="GeneID" id="71843"/>
<dbReference type="KEGG" id="mmu:71843"/>
<dbReference type="UCSC" id="uc007ump.3">
    <property type="organism name" value="mouse"/>
</dbReference>
<dbReference type="AGR" id="MGI:1919093"/>
<dbReference type="CTD" id="203069"/>
<dbReference type="MGI" id="MGI:1919093">
    <property type="gene designation" value="R3hcc1"/>
</dbReference>
<dbReference type="eggNOG" id="KOG4483">
    <property type="taxonomic scope" value="Eukaryota"/>
</dbReference>
<dbReference type="GeneTree" id="ENSGT00530000063711"/>
<dbReference type="InParanoid" id="Q8BSI6"/>
<dbReference type="OMA" id="IFPCQAS"/>
<dbReference type="OrthoDB" id="5418203at2759"/>
<dbReference type="BioGRID-ORCS" id="71843">
    <property type="hits" value="5 hits in 74 CRISPR screens"/>
</dbReference>
<dbReference type="PRO" id="PR:Q8BSI6"/>
<dbReference type="Proteomes" id="UP000000589">
    <property type="component" value="Chromosome 14"/>
</dbReference>
<dbReference type="RNAct" id="Q8BSI6">
    <property type="molecule type" value="protein"/>
</dbReference>
<dbReference type="Bgee" id="ENSMUSG00000034194">
    <property type="expression patterns" value="Expressed in undifferentiated genital tubercle and 248 other cell types or tissues"/>
</dbReference>
<dbReference type="ExpressionAtlas" id="Q8BSI6">
    <property type="expression patterns" value="baseline and differential"/>
</dbReference>
<dbReference type="GO" id="GO:0003676">
    <property type="term" value="F:nucleic acid binding"/>
    <property type="evidence" value="ECO:0007669"/>
    <property type="project" value="InterPro"/>
</dbReference>
<dbReference type="CDD" id="cd02638">
    <property type="entry name" value="R3H_unknown_1"/>
    <property type="match status" value="1"/>
</dbReference>
<dbReference type="Gene3D" id="3.30.70.330">
    <property type="match status" value="1"/>
</dbReference>
<dbReference type="Gene3D" id="3.30.1370.50">
    <property type="entry name" value="R3H-like domain"/>
    <property type="match status" value="1"/>
</dbReference>
<dbReference type="InterPro" id="IPR012677">
    <property type="entry name" value="Nucleotide-bd_a/b_plait_sf"/>
</dbReference>
<dbReference type="InterPro" id="IPR001374">
    <property type="entry name" value="R3H_dom"/>
</dbReference>
<dbReference type="InterPro" id="IPR036867">
    <property type="entry name" value="R3H_dom_sf"/>
</dbReference>
<dbReference type="InterPro" id="IPR039884">
    <property type="entry name" value="R3HC1/R3HCL"/>
</dbReference>
<dbReference type="PANTHER" id="PTHR21678">
    <property type="entry name" value="GROWTH INHIBITION AND DIFFERENTIATION RELATED PROTEIN 88"/>
    <property type="match status" value="1"/>
</dbReference>
<dbReference type="PANTHER" id="PTHR21678:SF6">
    <property type="entry name" value="R3H AND COILED-COIL DOMAIN-CONTAINING PROTEIN 1"/>
    <property type="match status" value="1"/>
</dbReference>
<dbReference type="Pfam" id="PF01424">
    <property type="entry name" value="R3H"/>
    <property type="match status" value="1"/>
</dbReference>
<dbReference type="SMART" id="SM00393">
    <property type="entry name" value="R3H"/>
    <property type="match status" value="1"/>
</dbReference>
<dbReference type="SUPFAM" id="SSF82708">
    <property type="entry name" value="R3H domain"/>
    <property type="match status" value="1"/>
</dbReference>
<dbReference type="PROSITE" id="PS51061">
    <property type="entry name" value="R3H"/>
    <property type="match status" value="1"/>
</dbReference>
<sequence length="488" mass="54163">MALLCLDGVFLSSAENDFVHRVQEELDRFLLQKQLSKVLLFPPVSSRLRYLIHRTAENFDLLSSFSVGEGWKRRTVICHLDIRVPSSDGPSGPCRPPASHPSKYRGPRYTSHQGAAAGPRGAPAGRWHRGRKPDQPLYVPRVLRRQGGPVAASIPGIKGEDPAGAVSEEEPREAGAGDAEADQGIAMLVTQELLKSPDPGHANEPQMGLGDTEPSENPEKEQGAETAVQQGSGAQLAMEEENRSHGMRSLVDQEEEEIEGEEEEKVDEKEEDTGKQKERVDEEEEKTDAQEGKVDSEGERMDEGEDKVDAEEEDEDEADADHGDFSELLQEITANLTEKEIKIEKIHLDTSAFTEELPGERDLTHLVEIYDFKPTLKTEDLLATFSEFQEKGFRIQWVDDTHAIGIFPCPASALEALAKDFSVLKIRPLTQGTKQSKLKALQRPKFLRLSKERPQTDSAVARRLVARALGLQHNRKKELPTPPSVLPS</sequence>
<name>R3HC1_MOUSE</name>